<comment type="function">
    <text evidence="2">Required for meiotic chromosome segregation.</text>
</comment>
<comment type="interaction">
    <interactant intactId="EBI-2651917">
        <id>O94276</id>
    </interactant>
    <interactant intactId="EBI-422882">
        <id>O74957</id>
        <label>ago1</label>
    </interactant>
    <organismsDiffer>false</organismsDiffer>
    <experiments>2</experiments>
</comment>
<comment type="interaction">
    <interactant intactId="EBI-2651917">
        <id>O94276</id>
    </interactant>
    <interactant intactId="EBI-354657">
        <id>O60016</id>
        <label>clr4</label>
    </interactant>
    <organismsDiffer>false</organismsDiffer>
    <experiments>2</experiments>
</comment>
<comment type="interaction">
    <interactant intactId="EBI-2651917">
        <id>O94276</id>
    </interactant>
    <interactant intactId="EBI-904913">
        <id>O74910</id>
        <label>raf1</label>
    </interactant>
    <organismsDiffer>false</organismsDiffer>
    <experiments>2</experiments>
</comment>
<comment type="interaction">
    <interactant intactId="EBI-2651917">
        <id>O94276</id>
    </interactant>
    <interactant intactId="EBI-904886">
        <id>O74560</id>
        <label>raf2</label>
    </interactant>
    <organismsDiffer>false</organismsDiffer>
    <experiments>3</experiments>
</comment>
<comment type="interaction">
    <interactant intactId="EBI-2651917">
        <id>O94276</id>
    </interactant>
    <interactant intactId="EBI-1111936">
        <id>Q10426</id>
        <label>rik1</label>
    </interactant>
    <organismsDiffer>false</organismsDiffer>
    <experiments>3</experiments>
</comment>
<comment type="subcellular location">
    <subcellularLocation>
        <location evidence="3">Nucleus</location>
        <location evidence="3">Nucleolus</location>
    </subcellularLocation>
</comment>
<feature type="chain" id="PRO_0000352818" description="Meiotic chromosome segregation protein P8B7.28c">
    <location>
        <begin position="1"/>
        <end position="215"/>
    </location>
</feature>
<feature type="region of interest" description="Disordered" evidence="1">
    <location>
        <begin position="159"/>
        <end position="202"/>
    </location>
</feature>
<feature type="compositionally biased region" description="Acidic residues" evidence="1">
    <location>
        <begin position="164"/>
        <end position="176"/>
    </location>
</feature>
<feature type="compositionally biased region" description="Acidic residues" evidence="1">
    <location>
        <begin position="187"/>
        <end position="201"/>
    </location>
</feature>
<feature type="helix" evidence="4">
    <location>
        <begin position="35"/>
        <end position="37"/>
    </location>
</feature>
<feature type="strand" evidence="4">
    <location>
        <begin position="39"/>
        <end position="41"/>
    </location>
</feature>
<feature type="strand" evidence="4">
    <location>
        <begin position="43"/>
        <end position="45"/>
    </location>
</feature>
<feature type="strand" evidence="4">
    <location>
        <begin position="48"/>
        <end position="50"/>
    </location>
</feature>
<feature type="turn" evidence="4">
    <location>
        <begin position="51"/>
        <end position="53"/>
    </location>
</feature>
<feature type="helix" evidence="4">
    <location>
        <begin position="56"/>
        <end position="60"/>
    </location>
</feature>
<feature type="strand" evidence="4">
    <location>
        <begin position="63"/>
        <end position="66"/>
    </location>
</feature>
<feature type="strand" evidence="4">
    <location>
        <begin position="69"/>
        <end position="72"/>
    </location>
</feature>
<feature type="turn" evidence="4">
    <location>
        <begin position="81"/>
        <end position="83"/>
    </location>
</feature>
<feature type="strand" evidence="4">
    <location>
        <begin position="90"/>
        <end position="92"/>
    </location>
</feature>
<feature type="strand" evidence="4">
    <location>
        <begin position="94"/>
        <end position="96"/>
    </location>
</feature>
<feature type="strand" evidence="4">
    <location>
        <begin position="99"/>
        <end position="102"/>
    </location>
</feature>
<feature type="helix" evidence="4">
    <location>
        <begin position="107"/>
        <end position="111"/>
    </location>
</feature>
<feature type="strand" evidence="4">
    <location>
        <begin position="112"/>
        <end position="114"/>
    </location>
</feature>
<feature type="helix" evidence="4">
    <location>
        <begin position="118"/>
        <end position="121"/>
    </location>
</feature>
<gene>
    <name type="ORF">SPBP8B7.28c</name>
</gene>
<accession>O94276</accession>
<reference key="1">
    <citation type="journal article" date="2002" name="Nature">
        <title>The genome sequence of Schizosaccharomyces pombe.</title>
        <authorList>
            <person name="Wood V."/>
            <person name="Gwilliam R."/>
            <person name="Rajandream M.A."/>
            <person name="Lyne M.H."/>
            <person name="Lyne R."/>
            <person name="Stewart A."/>
            <person name="Sgouros J.G."/>
            <person name="Peat N."/>
            <person name="Hayles J."/>
            <person name="Baker S.G."/>
            <person name="Basham D."/>
            <person name="Bowman S."/>
            <person name="Brooks K."/>
            <person name="Brown D."/>
            <person name="Brown S."/>
            <person name="Chillingworth T."/>
            <person name="Churcher C.M."/>
            <person name="Collins M."/>
            <person name="Connor R."/>
            <person name="Cronin A."/>
            <person name="Davis P."/>
            <person name="Feltwell T."/>
            <person name="Fraser A."/>
            <person name="Gentles S."/>
            <person name="Goble A."/>
            <person name="Hamlin N."/>
            <person name="Harris D.E."/>
            <person name="Hidalgo J."/>
            <person name="Hodgson G."/>
            <person name="Holroyd S."/>
            <person name="Hornsby T."/>
            <person name="Howarth S."/>
            <person name="Huckle E.J."/>
            <person name="Hunt S."/>
            <person name="Jagels K."/>
            <person name="James K.D."/>
            <person name="Jones L."/>
            <person name="Jones M."/>
            <person name="Leather S."/>
            <person name="McDonald S."/>
            <person name="McLean J."/>
            <person name="Mooney P."/>
            <person name="Moule S."/>
            <person name="Mungall K.L."/>
            <person name="Murphy L.D."/>
            <person name="Niblett D."/>
            <person name="Odell C."/>
            <person name="Oliver K."/>
            <person name="O'Neil S."/>
            <person name="Pearson D."/>
            <person name="Quail M.A."/>
            <person name="Rabbinowitsch E."/>
            <person name="Rutherford K.M."/>
            <person name="Rutter S."/>
            <person name="Saunders D."/>
            <person name="Seeger K."/>
            <person name="Sharp S."/>
            <person name="Skelton J."/>
            <person name="Simmonds M.N."/>
            <person name="Squares R."/>
            <person name="Squares S."/>
            <person name="Stevens K."/>
            <person name="Taylor K."/>
            <person name="Taylor R.G."/>
            <person name="Tivey A."/>
            <person name="Walsh S.V."/>
            <person name="Warren T."/>
            <person name="Whitehead S."/>
            <person name="Woodward J.R."/>
            <person name="Volckaert G."/>
            <person name="Aert R."/>
            <person name="Robben J."/>
            <person name="Grymonprez B."/>
            <person name="Weltjens I."/>
            <person name="Vanstreels E."/>
            <person name="Rieger M."/>
            <person name="Schaefer M."/>
            <person name="Mueller-Auer S."/>
            <person name="Gabel C."/>
            <person name="Fuchs M."/>
            <person name="Duesterhoeft A."/>
            <person name="Fritzc C."/>
            <person name="Holzer E."/>
            <person name="Moestl D."/>
            <person name="Hilbert H."/>
            <person name="Borzym K."/>
            <person name="Langer I."/>
            <person name="Beck A."/>
            <person name="Lehrach H."/>
            <person name="Reinhardt R."/>
            <person name="Pohl T.M."/>
            <person name="Eger P."/>
            <person name="Zimmermann W."/>
            <person name="Wedler H."/>
            <person name="Wambutt R."/>
            <person name="Purnelle B."/>
            <person name="Goffeau A."/>
            <person name="Cadieu E."/>
            <person name="Dreano S."/>
            <person name="Gloux S."/>
            <person name="Lelaure V."/>
            <person name="Mottier S."/>
            <person name="Galibert F."/>
            <person name="Aves S.J."/>
            <person name="Xiang Z."/>
            <person name="Hunt C."/>
            <person name="Moore K."/>
            <person name="Hurst S.M."/>
            <person name="Lucas M."/>
            <person name="Rochet M."/>
            <person name="Gaillardin C."/>
            <person name="Tallada V.A."/>
            <person name="Garzon A."/>
            <person name="Thode G."/>
            <person name="Daga R.R."/>
            <person name="Cruzado L."/>
            <person name="Jimenez J."/>
            <person name="Sanchez M."/>
            <person name="del Rey F."/>
            <person name="Benito J."/>
            <person name="Dominguez A."/>
            <person name="Revuelta J.L."/>
            <person name="Moreno S."/>
            <person name="Armstrong J."/>
            <person name="Forsburg S.L."/>
            <person name="Cerutti L."/>
            <person name="Lowe T."/>
            <person name="McCombie W.R."/>
            <person name="Paulsen I."/>
            <person name="Potashkin J."/>
            <person name="Shpakovski G.V."/>
            <person name="Ussery D."/>
            <person name="Barrell B.G."/>
            <person name="Nurse P."/>
        </authorList>
    </citation>
    <scope>NUCLEOTIDE SEQUENCE [LARGE SCALE GENOMIC DNA]</scope>
    <source>
        <strain>972 / ATCC 24843</strain>
    </source>
</reference>
<reference key="2">
    <citation type="journal article" date="2005" name="Curr. Biol.">
        <title>Novel genes required for meiotic chromosome segregation are identified by a high-throughput knockout screen in fission yeast.</title>
        <authorList>
            <person name="Gregan J."/>
            <person name="Rabitsch P.K."/>
            <person name="Sakem B."/>
            <person name="Csutak O."/>
            <person name="Latypov V."/>
            <person name="Lehmann E."/>
            <person name="Kohli J."/>
            <person name="Nasmyth K."/>
        </authorList>
    </citation>
    <scope>FUNCTION</scope>
</reference>
<reference key="3">
    <citation type="journal article" date="2006" name="Nat. Biotechnol.">
        <title>ORFeome cloning and global analysis of protein localization in the fission yeast Schizosaccharomyces pombe.</title>
        <authorList>
            <person name="Matsuyama A."/>
            <person name="Arai R."/>
            <person name="Yashiroda Y."/>
            <person name="Shirai A."/>
            <person name="Kamata A."/>
            <person name="Sekido S."/>
            <person name="Kobayashi Y."/>
            <person name="Hashimoto A."/>
            <person name="Hamamoto M."/>
            <person name="Hiraoka Y."/>
            <person name="Horinouchi S."/>
            <person name="Yoshida M."/>
        </authorList>
    </citation>
    <scope>SUBCELLULAR LOCATION [LARGE SCALE ANALYSIS]</scope>
</reference>
<evidence type="ECO:0000256" key="1">
    <source>
        <dbReference type="SAM" id="MobiDB-lite"/>
    </source>
</evidence>
<evidence type="ECO:0000269" key="2">
    <source>
    </source>
</evidence>
<evidence type="ECO:0000269" key="3">
    <source>
    </source>
</evidence>
<evidence type="ECO:0007829" key="4">
    <source>
        <dbReference type="PDB" id="2LUY"/>
    </source>
</evidence>
<organism>
    <name type="scientific">Schizosaccharomyces pombe (strain 972 / ATCC 24843)</name>
    <name type="common">Fission yeast</name>
    <dbReference type="NCBI Taxonomy" id="284812"/>
    <lineage>
        <taxon>Eukaryota</taxon>
        <taxon>Fungi</taxon>
        <taxon>Dikarya</taxon>
        <taxon>Ascomycota</taxon>
        <taxon>Taphrinomycotina</taxon>
        <taxon>Schizosaccharomycetes</taxon>
        <taxon>Schizosaccharomycetales</taxon>
        <taxon>Schizosaccharomycetaceae</taxon>
        <taxon>Schizosaccharomyces</taxon>
    </lineage>
</organism>
<name>YORS_SCHPO</name>
<protein>
    <recommendedName>
        <fullName>Meiotic chromosome segregation protein P8B7.28c</fullName>
    </recommendedName>
</protein>
<keyword id="KW-0002">3D-structure</keyword>
<keyword id="KW-0131">Cell cycle</keyword>
<keyword id="KW-0469">Meiosis</keyword>
<keyword id="KW-0539">Nucleus</keyword>
<keyword id="KW-1185">Reference proteome</keyword>
<dbReference type="EMBL" id="CU329671">
    <property type="protein sequence ID" value="CAA21813.1"/>
    <property type="molecule type" value="Genomic_DNA"/>
</dbReference>
<dbReference type="PIR" id="T40822">
    <property type="entry name" value="T40822"/>
</dbReference>
<dbReference type="PDB" id="2LUY">
    <property type="method" value="NMR"/>
    <property type="chains" value="A=32-126"/>
</dbReference>
<dbReference type="PDBsum" id="2LUY"/>
<dbReference type="BMRB" id="O94276"/>
<dbReference type="SMR" id="O94276"/>
<dbReference type="BioGRID" id="277883">
    <property type="interactions" value="35"/>
</dbReference>
<dbReference type="FunCoup" id="O94276">
    <property type="interactions" value="11"/>
</dbReference>
<dbReference type="IntAct" id="O94276">
    <property type="interactions" value="14"/>
</dbReference>
<dbReference type="STRING" id="284812.O94276"/>
<dbReference type="iPTMnet" id="O94276"/>
<dbReference type="PaxDb" id="4896-SPBP8B7.28c.1"/>
<dbReference type="EnsemblFungi" id="SPBP8B7.28c.1">
    <property type="protein sequence ID" value="SPBP8B7.28c.1:pep"/>
    <property type="gene ID" value="SPBP8B7.28c"/>
</dbReference>
<dbReference type="KEGG" id="spo:2541372"/>
<dbReference type="PomBase" id="SPBP8B7.28c"/>
<dbReference type="VEuPathDB" id="FungiDB:SPBP8B7.28c"/>
<dbReference type="HOGENOM" id="CLU_1283928_0_0_1"/>
<dbReference type="InParanoid" id="O94276"/>
<dbReference type="EvolutionaryTrace" id="O94276"/>
<dbReference type="PRO" id="PR:O94276"/>
<dbReference type="Proteomes" id="UP000002485">
    <property type="component" value="Chromosome II"/>
</dbReference>
<dbReference type="GO" id="GO:0000781">
    <property type="term" value="C:chromosome, telomeric region"/>
    <property type="evidence" value="ECO:0007669"/>
    <property type="project" value="GOC"/>
</dbReference>
<dbReference type="GO" id="GO:0005730">
    <property type="term" value="C:nucleolus"/>
    <property type="evidence" value="ECO:0007005"/>
    <property type="project" value="PomBase"/>
</dbReference>
<dbReference type="GO" id="GO:0005634">
    <property type="term" value="C:nucleus"/>
    <property type="evidence" value="ECO:0007005"/>
    <property type="project" value="PomBase"/>
</dbReference>
<dbReference type="GO" id="GO:0005721">
    <property type="term" value="C:pericentric heterochromatin"/>
    <property type="evidence" value="ECO:0000314"/>
    <property type="project" value="PomBase"/>
</dbReference>
<dbReference type="GO" id="GO:0030674">
    <property type="term" value="F:protein-macromolecule adaptor activity"/>
    <property type="evidence" value="ECO:0000353"/>
    <property type="project" value="PomBase"/>
</dbReference>
<dbReference type="GO" id="GO:0051321">
    <property type="term" value="P:meiotic cell cycle"/>
    <property type="evidence" value="ECO:0007669"/>
    <property type="project" value="UniProtKB-KW"/>
</dbReference>
<dbReference type="GO" id="GO:0031048">
    <property type="term" value="P:regulatory ncRNA-mediated heterochromatin formation"/>
    <property type="evidence" value="ECO:0000315"/>
    <property type="project" value="PomBase"/>
</dbReference>
<dbReference type="GO" id="GO:0030466">
    <property type="term" value="P:silent mating-type cassette heterochromatin formation"/>
    <property type="evidence" value="ECO:0000315"/>
    <property type="project" value="PomBase"/>
</dbReference>
<dbReference type="GO" id="GO:0140727">
    <property type="term" value="P:siRNA-mediated pericentric heterochromatin formation"/>
    <property type="evidence" value="ECO:0000315"/>
    <property type="project" value="PomBase"/>
</dbReference>
<dbReference type="GO" id="GO:0031509">
    <property type="term" value="P:subtelomeric heterochromatin formation"/>
    <property type="evidence" value="ECO:0000315"/>
    <property type="project" value="PomBase"/>
</dbReference>
<dbReference type="Gene3D" id="3.30.60.210">
    <property type="entry name" value="Stc1 domain"/>
    <property type="match status" value="2"/>
</dbReference>
<dbReference type="InterPro" id="IPR024630">
    <property type="entry name" value="Stc1"/>
</dbReference>
<dbReference type="InterPro" id="IPR043069">
    <property type="entry name" value="Stc1_sf"/>
</dbReference>
<dbReference type="Pfam" id="PF12898">
    <property type="entry name" value="Stc1"/>
    <property type="match status" value="1"/>
</dbReference>
<proteinExistence type="evidence at protein level"/>
<sequence length="215" mass="25075">MDFKSRKYKIKKHPKDCKLHAKKYRGTLNSKGKNDNDCLIMCMRCRKVKGIDSYSKTQWSKTFTFVRGRTVSVSDPKVICRTCQPKQHDSIWCTACQQTKGINEFSKAQRHVLDPRCQICVHSQRNDGDDNLESDKFVDPFIGDDSDLDDDIYIHDKQTINSEYADDVSDNTDEERTESKGQQESNSAEEYDDDDSDEDRMEEIFQQFKKEKQIV</sequence>